<sequence>MLLKNCETDKQRDIRYACLFKELDVKGNGQVTLDNLISAFEKNDHPLKGNDEAIKMLFTAMDVNKDSVVDLSDFKKYASNAESQIWNGFQRIDLDHDGKIGINEINRYLSDLDNQSICNNELNHELSNEKVNKFSRFFEWAFPKRKANIALRGQASHKKNTDNDRSKKTTDSDLYVTYDQWRDFLLLVPRKQGSRLHTAYSYFYLFNEDVDLSSEGDVTLINDFIRGFGFFIAGGISGVISRTCTAPFDRLKVFLIARTDLSSILLNSKTDLLAKNPNADINKISSPLAKAVKSLYRQGGIKAFYVGNGLNVIKVFPESSIKFGSFEVTKKIMTKLEGCRDTKDLSKFSTYIAGGLAGMAAQFSVYPIDTLKFRVQCAPLDTKLKGNNLLFQTAKDMFREGGGQIILQRCHSRYSGHISLCCIRFGDFFCLKKMVYCQTGKDPEPTTRSGHSKQPGCTSNGCIQWNCRSFCCLSNQSFKNKTTSPRNICTSLCV</sequence>
<accession>D6W196</accession>
<accession>P48233</accession>
<accession>Q45TY5</accession>
<accession>Q6WV05</accession>
<accession>Q96US1</accession>
<proteinExistence type="evidence at protein level"/>
<protein>
    <recommendedName>
        <fullName>Truncated non-functional calcium-binding mitochondrial carrier SAL1-1</fullName>
    </recommendedName>
    <alternativeName>
        <fullName>Suppressor of AAC2 lethality</fullName>
    </alternativeName>
</protein>
<comment type="function">
    <text evidence="4">Calcium-dependent mitochondrial solute carrier.</text>
</comment>
<comment type="subcellular location">
    <subcellularLocation>
        <location evidence="5">Mitochondrion inner membrane</location>
        <topology evidence="5">Multi-pass membrane protein</topology>
    </subcellularLocation>
</comment>
<comment type="miscellaneous">
    <text evidence="3">Present with 1170 molecules/cell in log phase SD medium.</text>
</comment>
<comment type="similarity">
    <text evidence="5">Belongs to the mitochondrial carrier (TC 2.A.29) family.</text>
</comment>
<comment type="caution">
    <text evidence="5">Strain S288c has a frameshift in position 403, which disrupts the gene coding for this protein and produces the non-functional allele sal1-1. A full-length functional allele can be found in strain CG379 (AC P0CI40).</text>
</comment>
<dbReference type="EMBL" id="X89016">
    <property type="protein sequence ID" value="CAA61427.1"/>
    <property type="molecule type" value="Genomic_DNA"/>
</dbReference>
<dbReference type="EMBL" id="Z71359">
    <property type="protein sequence ID" value="CAA95958.1"/>
    <property type="molecule type" value="Genomic_DNA"/>
</dbReference>
<dbReference type="EMBL" id="AY268134">
    <property type="protein sequence ID" value="AAR26280.1"/>
    <property type="molecule type" value="Genomic_DNA"/>
</dbReference>
<dbReference type="EMBL" id="BK006947">
    <property type="protein sequence ID" value="DAA10462.2"/>
    <property type="molecule type" value="Genomic_DNA"/>
</dbReference>
<dbReference type="PIR" id="S57539">
    <property type="entry name" value="S57539"/>
</dbReference>
<dbReference type="RefSeq" id="NP_014316.3">
    <property type="nucleotide sequence ID" value="NM_001182921.1"/>
</dbReference>
<dbReference type="SMR" id="D6W196"/>
<dbReference type="BioGRID" id="35740">
    <property type="interactions" value="63"/>
</dbReference>
<dbReference type="FunCoup" id="D6W196">
    <property type="interactions" value="24"/>
</dbReference>
<dbReference type="STRING" id="4932.YNL083W"/>
<dbReference type="iPTMnet" id="D6W196"/>
<dbReference type="PaxDb" id="4932-YNL083W"/>
<dbReference type="PeptideAtlas" id="D6W196"/>
<dbReference type="GeneID" id="855641"/>
<dbReference type="KEGG" id="sce:YNL083W"/>
<dbReference type="AGR" id="SGD:S000005027"/>
<dbReference type="SGD" id="S000005027">
    <property type="gene designation" value="SAL1"/>
</dbReference>
<dbReference type="eggNOG" id="KOG0036">
    <property type="taxonomic scope" value="Eukaryota"/>
</dbReference>
<dbReference type="HOGENOM" id="CLU_015166_2_1_1"/>
<dbReference type="InParanoid" id="D6W196"/>
<dbReference type="OrthoDB" id="270584at2759"/>
<dbReference type="BioCyc" id="YEAST:G3O-33112-MONOMER"/>
<dbReference type="BioGRID-ORCS" id="855641">
    <property type="hits" value="0 hits in 10 CRISPR screens"/>
</dbReference>
<dbReference type="PRO" id="PR:D6W196"/>
<dbReference type="Proteomes" id="UP000002311">
    <property type="component" value="Chromosome XIV"/>
</dbReference>
<dbReference type="RNAct" id="D6W196">
    <property type="molecule type" value="protein"/>
</dbReference>
<dbReference type="GO" id="GO:0005743">
    <property type="term" value="C:mitochondrial inner membrane"/>
    <property type="evidence" value="ECO:0007669"/>
    <property type="project" value="UniProtKB-SubCell"/>
</dbReference>
<dbReference type="GO" id="GO:0005739">
    <property type="term" value="C:mitochondrion"/>
    <property type="evidence" value="ECO:0007005"/>
    <property type="project" value="SGD"/>
</dbReference>
<dbReference type="GO" id="GO:0005347">
    <property type="term" value="F:ATP transmembrane transporter activity"/>
    <property type="evidence" value="ECO:0000318"/>
    <property type="project" value="GO_Central"/>
</dbReference>
<dbReference type="GO" id="GO:0005471">
    <property type="term" value="F:ATP:ADP antiporter activity"/>
    <property type="evidence" value="ECO:0000315"/>
    <property type="project" value="SGD"/>
</dbReference>
<dbReference type="GO" id="GO:0005509">
    <property type="term" value="F:calcium ion binding"/>
    <property type="evidence" value="ECO:0000314"/>
    <property type="project" value="SGD"/>
</dbReference>
<dbReference type="GO" id="GO:0015866">
    <property type="term" value="P:ADP transport"/>
    <property type="evidence" value="ECO:0000315"/>
    <property type="project" value="SGD"/>
</dbReference>
<dbReference type="GO" id="GO:0015867">
    <property type="term" value="P:ATP transport"/>
    <property type="evidence" value="ECO:0000315"/>
    <property type="project" value="SGD"/>
</dbReference>
<dbReference type="GO" id="GO:0006839">
    <property type="term" value="P:mitochondrial transport"/>
    <property type="evidence" value="ECO:0000315"/>
    <property type="project" value="SGD"/>
</dbReference>
<dbReference type="Gene3D" id="1.10.238.10">
    <property type="entry name" value="EF-hand"/>
    <property type="match status" value="1"/>
</dbReference>
<dbReference type="Gene3D" id="1.50.40.10">
    <property type="entry name" value="Mitochondrial carrier domain"/>
    <property type="match status" value="1"/>
</dbReference>
<dbReference type="InterPro" id="IPR011992">
    <property type="entry name" value="EF-hand-dom_pair"/>
</dbReference>
<dbReference type="InterPro" id="IPR018247">
    <property type="entry name" value="EF_Hand_1_Ca_BS"/>
</dbReference>
<dbReference type="InterPro" id="IPR002048">
    <property type="entry name" value="EF_hand_dom"/>
</dbReference>
<dbReference type="InterPro" id="IPR002067">
    <property type="entry name" value="Mit_carrier"/>
</dbReference>
<dbReference type="InterPro" id="IPR018108">
    <property type="entry name" value="Mitochondrial_sb/sol_carrier"/>
</dbReference>
<dbReference type="InterPro" id="IPR023395">
    <property type="entry name" value="Mt_carrier_dom_sf"/>
</dbReference>
<dbReference type="PANTHER" id="PTHR24089">
    <property type="entry name" value="SOLUTE CARRIER FAMILY 25"/>
    <property type="match status" value="1"/>
</dbReference>
<dbReference type="Pfam" id="PF13202">
    <property type="entry name" value="EF-hand_5"/>
    <property type="match status" value="1"/>
</dbReference>
<dbReference type="Pfam" id="PF13499">
    <property type="entry name" value="EF-hand_7"/>
    <property type="match status" value="1"/>
</dbReference>
<dbReference type="Pfam" id="PF00153">
    <property type="entry name" value="Mito_carr"/>
    <property type="match status" value="2"/>
</dbReference>
<dbReference type="PRINTS" id="PR00926">
    <property type="entry name" value="MITOCARRIER"/>
</dbReference>
<dbReference type="SUPFAM" id="SSF47473">
    <property type="entry name" value="EF-hand"/>
    <property type="match status" value="1"/>
</dbReference>
<dbReference type="SUPFAM" id="SSF103506">
    <property type="entry name" value="Mitochondrial carrier"/>
    <property type="match status" value="1"/>
</dbReference>
<dbReference type="PROSITE" id="PS00018">
    <property type="entry name" value="EF_HAND_1"/>
    <property type="match status" value="1"/>
</dbReference>
<dbReference type="PROSITE" id="PS50222">
    <property type="entry name" value="EF_HAND_2"/>
    <property type="match status" value="3"/>
</dbReference>
<dbReference type="PROSITE" id="PS50920">
    <property type="entry name" value="SOLCAR"/>
    <property type="match status" value="2"/>
</dbReference>
<gene>
    <name type="primary">SAL1</name>
    <name type="ordered locus">YNL083W</name>
    <name type="ORF">N2312</name>
</gene>
<feature type="chain" id="PRO_0000402277" description="Truncated non-functional calcium-binding mitochondrial carrier SAL1-1">
    <location>
        <begin position="1"/>
        <end position="494"/>
    </location>
</feature>
<feature type="transmembrane region" description="Helical; Name=1" evidence="1">
    <location>
        <begin position="231"/>
        <end position="248"/>
    </location>
</feature>
<feature type="transmembrane region" description="Helical; Name=2" evidence="1">
    <location>
        <begin position="307"/>
        <end position="326"/>
    </location>
</feature>
<feature type="transmembrane region" description="Helical; Name=3" evidence="1">
    <location>
        <begin position="355"/>
        <end position="368"/>
    </location>
</feature>
<feature type="transmembrane region" description="Helical; Name=4" evidence="1">
    <location>
        <begin position="409"/>
        <end position="428"/>
    </location>
</feature>
<feature type="transmembrane region" description="Helical; Name=5" evidence="1">
    <location>
        <begin position="458"/>
        <end position="475"/>
    </location>
</feature>
<feature type="domain" description="EF-hand 1" evidence="2">
    <location>
        <begin position="11"/>
        <end position="46"/>
    </location>
</feature>
<feature type="domain" description="EF-hand 2" evidence="2">
    <location>
        <begin position="80"/>
        <end position="115"/>
    </location>
</feature>
<feature type="domain" description="EF-hand 3" evidence="5">
    <location>
        <begin position="120"/>
        <end position="155"/>
    </location>
</feature>
<feature type="domain" description="EF-hand 4" evidence="2">
    <location>
        <begin position="156"/>
        <end position="191"/>
    </location>
</feature>
<feature type="repeat" description="Solcar 1">
    <location>
        <begin position="225"/>
        <end position="332"/>
    </location>
</feature>
<feature type="repeat" description="Solcar 2">
    <location>
        <begin position="345"/>
        <end position="434"/>
    </location>
</feature>
<feature type="repeat" description="Solcar 3; truncated">
    <location>
        <begin position="452"/>
        <end position="494"/>
    </location>
</feature>
<feature type="binding site" evidence="5">
    <location>
        <position position="65"/>
    </location>
    <ligand>
        <name>Ca(2+)</name>
        <dbReference type="ChEBI" id="CHEBI:29108"/>
        <label>1</label>
    </ligand>
</feature>
<feature type="binding site" evidence="5">
    <location>
        <position position="70"/>
    </location>
    <ligand>
        <name>Ca(2+)</name>
        <dbReference type="ChEBI" id="CHEBI:29108"/>
        <label>1</label>
    </ligand>
</feature>
<feature type="binding site" evidence="2">
    <location>
        <position position="93"/>
    </location>
    <ligand>
        <name>Ca(2+)</name>
        <dbReference type="ChEBI" id="CHEBI:29108"/>
        <label>2</label>
    </ligand>
</feature>
<feature type="binding site" evidence="2">
    <location>
        <position position="95"/>
    </location>
    <ligand>
        <name>Ca(2+)</name>
        <dbReference type="ChEBI" id="CHEBI:29108"/>
        <label>2</label>
    </ligand>
</feature>
<feature type="binding site" evidence="2">
    <location>
        <position position="97"/>
    </location>
    <ligand>
        <name>Ca(2+)</name>
        <dbReference type="ChEBI" id="CHEBI:29108"/>
        <label>2</label>
    </ligand>
</feature>
<feature type="binding site" evidence="2">
    <location>
        <position position="99"/>
    </location>
    <ligand>
        <name>Ca(2+)</name>
        <dbReference type="ChEBI" id="CHEBI:29108"/>
        <label>2</label>
    </ligand>
</feature>
<feature type="binding site" evidence="2">
    <location>
        <position position="104"/>
    </location>
    <ligand>
        <name>Ca(2+)</name>
        <dbReference type="ChEBI" id="CHEBI:29108"/>
        <label>2</label>
    </ligand>
</feature>
<feature type="binding site" evidence="5">
    <location>
        <position position="161"/>
    </location>
    <ligand>
        <name>Ca(2+)</name>
        <dbReference type="ChEBI" id="CHEBI:29108"/>
        <label>3</label>
    </ligand>
</feature>
<feature type="binding site" evidence="5">
    <location>
        <position position="166"/>
    </location>
    <ligand>
        <name>Ca(2+)</name>
        <dbReference type="ChEBI" id="CHEBI:29108"/>
        <label>3</label>
    </ligand>
</feature>
<feature type="sequence conflict" description="In Ref. 3; DAA10462." evidence="5" ref="3">
    <original>V</original>
    <variation>M</variation>
    <location>
        <position position="131"/>
    </location>
</feature>
<reference key="1">
    <citation type="journal article" date="1996" name="Yeast">
        <title>The sequence of a 17,933 bp segment of Saccharomyces cerevisiae chromosome XIV contains the RHO2, TOP2, MKT1 and END3 genes and five new open reading frames.</title>
        <authorList>
            <person name="Soler-Mira A."/>
            <person name="Saiz J.E."/>
            <person name="Ballesta J.P.G."/>
            <person name="Remacha M.A."/>
        </authorList>
    </citation>
    <scope>NUCLEOTIDE SEQUENCE [GENOMIC DNA]</scope>
    <source>
        <strain>ATCC 96604 / S288c / FY1679</strain>
    </source>
</reference>
<reference key="2">
    <citation type="journal article" date="1996" name="Yeast">
        <title>Sequencing a cosmid clone of Saccharomyces cerevisiae chromosome XIV reveals 12 new open reading frames (ORFs) and an ancient duplication of six ORFs.</title>
        <authorList>
            <person name="Poehlmann R."/>
            <person name="Philippsen P."/>
        </authorList>
    </citation>
    <scope>NUCLEOTIDE SEQUENCE [GENOMIC DNA]</scope>
    <source>
        <strain>ATCC 96604 / S288c / FY1679</strain>
    </source>
</reference>
<reference key="3">
    <citation type="journal article" date="1997" name="Nature">
        <title>The nucleotide sequence of Saccharomyces cerevisiae chromosome XIV and its evolutionary implications.</title>
        <authorList>
            <person name="Philippsen P."/>
            <person name="Kleine K."/>
            <person name="Poehlmann R."/>
            <person name="Duesterhoeft A."/>
            <person name="Hamberg K."/>
            <person name="Hegemann J.H."/>
            <person name="Obermaier B."/>
            <person name="Urrestarazu L.A."/>
            <person name="Aert R."/>
            <person name="Albermann K."/>
            <person name="Altmann R."/>
            <person name="Andre B."/>
            <person name="Baladron V."/>
            <person name="Ballesta J.P.G."/>
            <person name="Becam A.-M."/>
            <person name="Beinhauer J.D."/>
            <person name="Boskovic J."/>
            <person name="Buitrago M.J."/>
            <person name="Bussereau F."/>
            <person name="Coster F."/>
            <person name="Crouzet M."/>
            <person name="D'Angelo M."/>
            <person name="Dal Pero F."/>
            <person name="De Antoni A."/>
            <person name="del Rey F."/>
            <person name="Doignon F."/>
            <person name="Domdey H."/>
            <person name="Dubois E."/>
            <person name="Fiedler T.A."/>
            <person name="Fleig U."/>
            <person name="Floeth M."/>
            <person name="Fritz C."/>
            <person name="Gaillardin C."/>
            <person name="Garcia-Cantalejo J.M."/>
            <person name="Glansdorff N."/>
            <person name="Goffeau A."/>
            <person name="Gueldener U."/>
            <person name="Herbert C.J."/>
            <person name="Heumann K."/>
            <person name="Heuss-Neitzel D."/>
            <person name="Hilbert H."/>
            <person name="Hinni K."/>
            <person name="Iraqui Houssaini I."/>
            <person name="Jacquet M."/>
            <person name="Jimenez A."/>
            <person name="Jonniaux J.-L."/>
            <person name="Karpfinger-Hartl L."/>
            <person name="Lanfranchi G."/>
            <person name="Lepingle A."/>
            <person name="Levesque H."/>
            <person name="Lyck R."/>
            <person name="Maftahi M."/>
            <person name="Mallet L."/>
            <person name="Maurer C.T.C."/>
            <person name="Messenguy F."/>
            <person name="Mewes H.-W."/>
            <person name="Moestl D."/>
            <person name="Nasr F."/>
            <person name="Nicaud J.-M."/>
            <person name="Niedenthal R.K."/>
            <person name="Pandolfo D."/>
            <person name="Pierard A."/>
            <person name="Piravandi E."/>
            <person name="Planta R.J."/>
            <person name="Pohl T.M."/>
            <person name="Purnelle B."/>
            <person name="Rebischung C."/>
            <person name="Remacha M.A."/>
            <person name="Revuelta J.L."/>
            <person name="Rinke M."/>
            <person name="Saiz J.E."/>
            <person name="Sartorello F."/>
            <person name="Scherens B."/>
            <person name="Sen-Gupta M."/>
            <person name="Soler-Mira A."/>
            <person name="Urbanus J.H.M."/>
            <person name="Valle G."/>
            <person name="Van Dyck L."/>
            <person name="Verhasselt P."/>
            <person name="Vierendeels F."/>
            <person name="Vissers S."/>
            <person name="Voet M."/>
            <person name="Volckaert G."/>
            <person name="Wach A."/>
            <person name="Wambutt R."/>
            <person name="Wedler H."/>
            <person name="Zollner A."/>
            <person name="Hani J."/>
        </authorList>
    </citation>
    <scope>NUCLEOTIDE SEQUENCE [LARGE SCALE GENOMIC DNA]</scope>
    <source>
        <strain>ATCC 204508 / S288c</strain>
    </source>
</reference>
<reference key="4">
    <citation type="journal article" date="2014" name="G3 (Bethesda)">
        <title>The reference genome sequence of Saccharomyces cerevisiae: Then and now.</title>
        <authorList>
            <person name="Engel S.R."/>
            <person name="Dietrich F.S."/>
            <person name="Fisk D.G."/>
            <person name="Binkley G."/>
            <person name="Balakrishnan R."/>
            <person name="Costanzo M.C."/>
            <person name="Dwight S.S."/>
            <person name="Hitz B.C."/>
            <person name="Karra K."/>
            <person name="Nash R.S."/>
            <person name="Weng S."/>
            <person name="Wong E.D."/>
            <person name="Lloyd P."/>
            <person name="Skrzypek M.S."/>
            <person name="Miyasato S.R."/>
            <person name="Simison M."/>
            <person name="Cherry J.M."/>
        </authorList>
    </citation>
    <scope>GENOME REANNOTATION</scope>
    <source>
        <strain>ATCC 204508 / S288c</strain>
    </source>
</reference>
<reference key="5">
    <citation type="journal article" date="2003" name="Genome Biol.">
        <title>Reinvestigation of the Saccharomyces cerevisiae genome annotation by comparison to the genome of a related fungus: Ashbya gossypii.</title>
        <authorList>
            <person name="Brachat S."/>
            <person name="Dietrich F.S."/>
            <person name="Voegeli S."/>
            <person name="Zhang Z."/>
            <person name="Stuart L."/>
            <person name="Lerch A."/>
            <person name="Gates K."/>
            <person name="Gaffney T.D."/>
            <person name="Philippsen P."/>
        </authorList>
    </citation>
    <scope>NUCLEOTIDE SEQUENCE [GENOMIC DNA] OF 364-436</scope>
    <source>
        <strain>ATCC 204511 / S288c / AB972</strain>
    </source>
</reference>
<reference key="6">
    <citation type="journal article" date="1997" name="Yeast">
        <title>Phylogenetic classification of the mitochondrial carrier family of Saccharomyces cerevisiae.</title>
        <authorList>
            <person name="el Moualij B."/>
            <person name="Duyckaerts C."/>
            <person name="Lamotte-Brasseur J."/>
            <person name="Sluse F.E."/>
        </authorList>
    </citation>
    <scope>IDENTIFICATION OF PROBABLE FRAMESHIFT</scope>
</reference>
<reference key="7">
    <citation type="journal article" date="2003" name="Nature">
        <title>Global analysis of protein expression in yeast.</title>
        <authorList>
            <person name="Ghaemmaghami S."/>
            <person name="Huh W.-K."/>
            <person name="Bower K."/>
            <person name="Howson R.W."/>
            <person name="Belle A."/>
            <person name="Dephoure N."/>
            <person name="O'Shea E.K."/>
            <person name="Weissman J.S."/>
        </authorList>
    </citation>
    <scope>LEVEL OF PROTEIN EXPRESSION [LARGE SCALE ANALYSIS]</scope>
</reference>
<reference key="8">
    <citation type="journal article" date="2004" name="Genetics">
        <title>Sal1p, a calcium-dependent carrier protein that suppresses an essential cellular function associated With the Aac2 isoform of ADP/ATP translocase in Saccharomyces cerevisiae.</title>
        <authorList>
            <person name="Chen X.J."/>
        </authorList>
    </citation>
    <scope>FUNCTION</scope>
    <scope>IDENTIFICATION OF FRAMESHIFT IN SAL1-1</scope>
    <source>
        <strain>M2915-6A</strain>
    </source>
</reference>
<reference key="9">
    <citation type="journal article" date="2009" name="Genetics">
        <title>Polymorphisms in multiple genes contribute to the spontaneous mitochondrial genome instability of Saccharomyces cerevisiae S288C strains.</title>
        <authorList>
            <person name="Dimitrov L.N."/>
            <person name="Brem R.B."/>
            <person name="Kruglyak L."/>
            <person name="Gottschling D.E."/>
        </authorList>
    </citation>
    <scope>CONFIRMATION OF FRAMESHIFT IN SAL1-1</scope>
    <source>
        <strain>ATCC 200879 / BY4716</strain>
        <strain>ATCC 204508 / S288c</strain>
    </source>
</reference>
<name>CMC1_YEAST</name>
<evidence type="ECO:0000255" key="1"/>
<evidence type="ECO:0000255" key="2">
    <source>
        <dbReference type="PROSITE-ProRule" id="PRU00448"/>
    </source>
</evidence>
<evidence type="ECO:0000269" key="3">
    <source>
    </source>
</evidence>
<evidence type="ECO:0000269" key="4">
    <source>
    </source>
</evidence>
<evidence type="ECO:0000305" key="5"/>
<organism>
    <name type="scientific">Saccharomyces cerevisiae (strain ATCC 204508 / S288c)</name>
    <name type="common">Baker's yeast</name>
    <dbReference type="NCBI Taxonomy" id="559292"/>
    <lineage>
        <taxon>Eukaryota</taxon>
        <taxon>Fungi</taxon>
        <taxon>Dikarya</taxon>
        <taxon>Ascomycota</taxon>
        <taxon>Saccharomycotina</taxon>
        <taxon>Saccharomycetes</taxon>
        <taxon>Saccharomycetales</taxon>
        <taxon>Saccharomycetaceae</taxon>
        <taxon>Saccharomyces</taxon>
    </lineage>
</organism>
<keyword id="KW-0106">Calcium</keyword>
<keyword id="KW-0472">Membrane</keyword>
<keyword id="KW-0479">Metal-binding</keyword>
<keyword id="KW-0496">Mitochondrion</keyword>
<keyword id="KW-0999">Mitochondrion inner membrane</keyword>
<keyword id="KW-1185">Reference proteome</keyword>
<keyword id="KW-0677">Repeat</keyword>
<keyword id="KW-0812">Transmembrane</keyword>
<keyword id="KW-1133">Transmembrane helix</keyword>
<keyword id="KW-0813">Transport</keyword>